<geneLocation type="chloroplast"/>
<reference key="1">
    <citation type="submission" date="2007-03" db="EMBL/GenBank/DDBJ databases">
        <title>Sequencing analysis of Lepidium virginicum JO26 chloroplast DNA.</title>
        <authorList>
            <person name="Hosouchi T."/>
            <person name="Tsuruoka H."/>
            <person name="Kotani H."/>
        </authorList>
    </citation>
    <scope>NUCLEOTIDE SEQUENCE [LARGE SCALE GENOMIC DNA]</scope>
</reference>
<keyword id="KW-0150">Chloroplast</keyword>
<keyword id="KW-0249">Electron transport</keyword>
<keyword id="KW-0472">Membrane</keyword>
<keyword id="KW-0602">Photosynthesis</keyword>
<keyword id="KW-0934">Plastid</keyword>
<keyword id="KW-0793">Thylakoid</keyword>
<keyword id="KW-0812">Transmembrane</keyword>
<keyword id="KW-1133">Transmembrane helix</keyword>
<keyword id="KW-0813">Transport</keyword>
<gene>
    <name evidence="1" type="primary">petL</name>
</gene>
<accession>A4QLC4</accession>
<dbReference type="EMBL" id="AP009374">
    <property type="protein sequence ID" value="BAF50479.1"/>
    <property type="molecule type" value="Genomic_DNA"/>
</dbReference>
<dbReference type="RefSeq" id="YP_001123655.1">
    <property type="nucleotide sequence ID" value="NC_009273.1"/>
</dbReference>
<dbReference type="SMR" id="A4QLC4"/>
<dbReference type="GeneID" id="4962069"/>
<dbReference type="GO" id="GO:0009535">
    <property type="term" value="C:chloroplast thylakoid membrane"/>
    <property type="evidence" value="ECO:0007669"/>
    <property type="project" value="UniProtKB-SubCell"/>
</dbReference>
<dbReference type="GO" id="GO:0009512">
    <property type="term" value="C:cytochrome b6f complex"/>
    <property type="evidence" value="ECO:0007669"/>
    <property type="project" value="InterPro"/>
</dbReference>
<dbReference type="GO" id="GO:0045158">
    <property type="term" value="F:electron transporter, transferring electrons within cytochrome b6/f complex of photosystem II activity"/>
    <property type="evidence" value="ECO:0007669"/>
    <property type="project" value="UniProtKB-UniRule"/>
</dbReference>
<dbReference type="GO" id="GO:0015979">
    <property type="term" value="P:photosynthesis"/>
    <property type="evidence" value="ECO:0007669"/>
    <property type="project" value="UniProtKB-KW"/>
</dbReference>
<dbReference type="HAMAP" id="MF_00433">
    <property type="entry name" value="Cytb6_f_PetL"/>
    <property type="match status" value="1"/>
</dbReference>
<dbReference type="InterPro" id="IPR007802">
    <property type="entry name" value="Cyt_b6/f_cplx_su6"/>
</dbReference>
<dbReference type="PANTHER" id="PTHR37266">
    <property type="entry name" value="CYTOCHROME B6-F COMPLEX SUBUNIT 6"/>
    <property type="match status" value="1"/>
</dbReference>
<dbReference type="PANTHER" id="PTHR37266:SF1">
    <property type="entry name" value="CYTOCHROME B6-F COMPLEX SUBUNIT 6"/>
    <property type="match status" value="1"/>
</dbReference>
<dbReference type="Pfam" id="PF05115">
    <property type="entry name" value="PetL"/>
    <property type="match status" value="1"/>
</dbReference>
<comment type="function">
    <text evidence="1">Component of the cytochrome b6-f complex, which mediates electron transfer between photosystem II (PSII) and photosystem I (PSI), cyclic electron flow around PSI, and state transitions. PetL is important for photoautotrophic growth as well as for electron transfer efficiency and stability of the cytochrome b6-f complex.</text>
</comment>
<comment type="subunit">
    <text evidence="1">The 4 large subunits of the cytochrome b6-f complex are cytochrome b6, subunit IV (17 kDa polypeptide, PetD), cytochrome f and the Rieske protein, while the 4 small subunits are PetG, PetL, PetM and PetN. The complex functions as a dimer.</text>
</comment>
<comment type="subcellular location">
    <subcellularLocation>
        <location evidence="1">Plastid</location>
        <location evidence="1">Chloroplast thylakoid membrane</location>
        <topology evidence="1">Single-pass membrane protein</topology>
    </subcellularLocation>
</comment>
<comment type="similarity">
    <text evidence="1">Belongs to the PetL family.</text>
</comment>
<evidence type="ECO:0000255" key="1">
    <source>
        <dbReference type="HAMAP-Rule" id="MF_00433"/>
    </source>
</evidence>
<sequence length="31" mass="3401">MPTITSYFGFLLAALTITSVLFIGLSKIRLI</sequence>
<feature type="chain" id="PRO_0000300147" description="Cytochrome b6-f complex subunit 6">
    <location>
        <begin position="1"/>
        <end position="31"/>
    </location>
</feature>
<feature type="transmembrane region" description="Helical" evidence="1">
    <location>
        <begin position="4"/>
        <end position="24"/>
    </location>
</feature>
<name>PETL_LEPVR</name>
<protein>
    <recommendedName>
        <fullName evidence="1">Cytochrome b6-f complex subunit 6</fullName>
    </recommendedName>
    <alternativeName>
        <fullName evidence="1">Cytochrome b6-f complex subunit PetL</fullName>
    </alternativeName>
    <alternativeName>
        <fullName evidence="1">Cytochrome b6-f complex subunit VI</fullName>
    </alternativeName>
</protein>
<organism>
    <name type="scientific">Lepidium virginicum</name>
    <name type="common">Virginia pepperweed</name>
    <dbReference type="NCBI Taxonomy" id="59292"/>
    <lineage>
        <taxon>Eukaryota</taxon>
        <taxon>Viridiplantae</taxon>
        <taxon>Streptophyta</taxon>
        <taxon>Embryophyta</taxon>
        <taxon>Tracheophyta</taxon>
        <taxon>Spermatophyta</taxon>
        <taxon>Magnoliopsida</taxon>
        <taxon>eudicotyledons</taxon>
        <taxon>Gunneridae</taxon>
        <taxon>Pentapetalae</taxon>
        <taxon>rosids</taxon>
        <taxon>malvids</taxon>
        <taxon>Brassicales</taxon>
        <taxon>Brassicaceae</taxon>
        <taxon>Lepidieae</taxon>
        <taxon>Lepidium</taxon>
    </lineage>
</organism>
<proteinExistence type="inferred from homology"/>